<accession>Q754G0</accession>
<name>CHO2_EREGS</name>
<comment type="function">
    <text evidence="1">Catalyzes the first step of the methylation pathway of phosphatidylcholine biosynthesis, the SAM-dependent methylation of phosphatidylethanolamine (PE) to phosphatidylmonomethylethanolamine (PMME).</text>
</comment>
<comment type="catalytic activity">
    <reaction evidence="1">
        <text>a 1,2-diacyl-sn-glycero-3-phosphoethanolamine + S-adenosyl-L-methionine = a 1,2-diacyl-sn-glycero-3-phospho-N-methylethanolamine + S-adenosyl-L-homocysteine + H(+)</text>
        <dbReference type="Rhea" id="RHEA:11164"/>
        <dbReference type="ChEBI" id="CHEBI:15378"/>
        <dbReference type="ChEBI" id="CHEBI:57856"/>
        <dbReference type="ChEBI" id="CHEBI:59789"/>
        <dbReference type="ChEBI" id="CHEBI:64573"/>
        <dbReference type="ChEBI" id="CHEBI:64612"/>
        <dbReference type="EC" id="2.1.1.17"/>
    </reaction>
</comment>
<comment type="pathway">
    <text evidence="1">Phospholipid metabolism; phosphatidylcholine biosynthesis.</text>
</comment>
<comment type="subcellular location">
    <subcellularLocation>
        <location evidence="1">Endoplasmic reticulum membrane</location>
        <topology evidence="1">Multi-pass membrane protein</topology>
    </subcellularLocation>
</comment>
<comment type="similarity">
    <text evidence="1">Belongs to the class VI-like SAM-binding methyltransferase superfamily. CHO2 family.</text>
</comment>
<sequence length="843" mass="97840">MTETKSGKAVAPAAQDSVAGTLAVCRSSGEEFRVPKTHDMLRSLFDPRLRKSFLELCITLSLVANCAFCYWSWRVMGGEWAMRMYLAQYLAWRLTYNLGIGLILHYQSHYEFLTEFAKRNGLFASGAASKSWLASFCQFEIASKMPREYDMAQYPTEFNVWLLFRQFVDLVLMQDFTTYVLYVLLSFSKSQVTWSLLQHLNWTSCRVYVGTLMLLLNVWVKMDAHRVVKDYAWYWGDFFFLLKDSNLIFDGVFNISPHPMYSIGYMGYYGVSLITGDYRVLLVSILGHFLQFLFLKYVETPHIERIYGPDQPSSIERVDDQIIKNNRNYTRPLMMTYFWFKNFDPLRPTDYFTVGTAAASISAILLNPKKETVFAITLFVKLVTSMVNFFILRRQSTDKWFTKLFLRNGYTQLYSYQMWQFIYNFNLMLSYVTLALQTWIQFQALSQHDYTNVIFGFILVALHIWADGEILNALTEFGWFYGDFFLTNYIQRPKLASHGIYRYLKNPECVLGVAGAWGTVLITDFSVENIILATIWTLSNHIMVTFVESPHVAKVYGNEMLARQSGVGKTLLGFTPIKHFSDWLDKFSGSLIDMLNVSTEGRDQLEDVIAAALQATTRKLSPDSEFEINRDSENNSDGDFSFTIGDSIEISWKLPRELYHDEDWIGLYRVLETGEDRYRTLVSSRDHWCATNTMGYPKSVKAIGAVKEFTKGDTCVQGRVVFDHNLLYFEKGVYEFRYHSTSGHKVLMISPPFKITVPQLDLDTPEALYQSTVKLLEKCHCLNENGRFEHSKNKYLSERTLQKLFRNSTGADISSDYMKRVNYEIREITERIYEMKKILDSLR</sequence>
<reference key="1">
    <citation type="journal article" date="2004" name="Science">
        <title>The Ashbya gossypii genome as a tool for mapping the ancient Saccharomyces cerevisiae genome.</title>
        <authorList>
            <person name="Dietrich F.S."/>
            <person name="Voegeli S."/>
            <person name="Brachat S."/>
            <person name="Lerch A."/>
            <person name="Gates K."/>
            <person name="Steiner S."/>
            <person name="Mohr C."/>
            <person name="Poehlmann R."/>
            <person name="Luedi P."/>
            <person name="Choi S."/>
            <person name="Wing R.A."/>
            <person name="Flavier A."/>
            <person name="Gaffney T.D."/>
            <person name="Philippsen P."/>
        </authorList>
    </citation>
    <scope>NUCLEOTIDE SEQUENCE [LARGE SCALE GENOMIC DNA]</scope>
    <source>
        <strain>ATCC 10895 / CBS 109.51 / FGSC 9923 / NRRL Y-1056</strain>
    </source>
</reference>
<reference key="2">
    <citation type="journal article" date="2013" name="G3 (Bethesda)">
        <title>Genomes of Ashbya fungi isolated from insects reveal four mating-type loci, numerous translocations, lack of transposons, and distinct gene duplications.</title>
        <authorList>
            <person name="Dietrich F.S."/>
            <person name="Voegeli S."/>
            <person name="Kuo S."/>
            <person name="Philippsen P."/>
        </authorList>
    </citation>
    <scope>GENOME REANNOTATION</scope>
    <source>
        <strain>ATCC 10895 / CBS 109.51 / FGSC 9923 / NRRL Y-1056</strain>
    </source>
</reference>
<feature type="chain" id="PRO_0000405872" description="Phosphatidylethanolamine N-methyltransferase">
    <location>
        <begin position="1"/>
        <end position="843"/>
    </location>
</feature>
<feature type="topological domain" description="Lumenal" evidence="1">
    <location>
        <begin position="1"/>
        <end position="52"/>
    </location>
</feature>
<feature type="transmembrane region" description="Helical" evidence="1">
    <location>
        <begin position="53"/>
        <end position="73"/>
    </location>
</feature>
<feature type="topological domain" description="Cytoplasmic" evidence="1">
    <location>
        <begin position="74"/>
        <end position="83"/>
    </location>
</feature>
<feature type="transmembrane region" description="Helical" evidence="1">
    <location>
        <begin position="84"/>
        <end position="104"/>
    </location>
</feature>
<feature type="topological domain" description="Lumenal" evidence="1">
    <location>
        <begin position="105"/>
        <end position="166"/>
    </location>
</feature>
<feature type="transmembrane region" description="Helical" evidence="1">
    <location>
        <begin position="167"/>
        <end position="187"/>
    </location>
</feature>
<feature type="topological domain" description="Cytoplasmic" evidence="1">
    <location>
        <begin position="188"/>
        <end position="197"/>
    </location>
</feature>
<feature type="transmembrane region" description="Helical" evidence="1">
    <location>
        <begin position="198"/>
        <end position="220"/>
    </location>
</feature>
<feature type="topological domain" description="Lumenal" evidence="1">
    <location>
        <begin position="221"/>
        <end position="246"/>
    </location>
</feature>
<feature type="transmembrane region" description="Helical" evidence="1">
    <location>
        <begin position="247"/>
        <end position="267"/>
    </location>
</feature>
<feature type="topological domain" description="Cytoplasmic" evidence="1">
    <location>
        <begin position="268"/>
        <end position="279"/>
    </location>
</feature>
<feature type="transmembrane region" description="Helical" evidence="1">
    <location>
        <begin position="280"/>
        <end position="300"/>
    </location>
</feature>
<feature type="topological domain" description="Lumenal" evidence="1">
    <location>
        <begin position="301"/>
        <end position="348"/>
    </location>
</feature>
<feature type="transmembrane region" description="Helical" evidence="1">
    <location>
        <begin position="349"/>
        <end position="366"/>
    </location>
</feature>
<feature type="topological domain" description="Cytoplasmic" evidence="1">
    <location>
        <begin position="367"/>
        <end position="371"/>
    </location>
</feature>
<feature type="transmembrane region" description="Helical" evidence="1">
    <location>
        <begin position="372"/>
        <end position="392"/>
    </location>
</feature>
<feature type="topological domain" description="Lumenal" evidence="1">
    <location>
        <begin position="393"/>
        <end position="419"/>
    </location>
</feature>
<feature type="transmembrane region" description="Helical" evidence="1">
    <location>
        <begin position="420"/>
        <end position="440"/>
    </location>
</feature>
<feature type="topological domain" description="Cytoplasmic" evidence="1">
    <location>
        <begin position="441"/>
        <end position="452"/>
    </location>
</feature>
<feature type="transmembrane region" description="Helical" evidence="1">
    <location>
        <begin position="453"/>
        <end position="473"/>
    </location>
</feature>
<feature type="topological domain" description="Lumenal" evidence="1">
    <location>
        <begin position="474"/>
        <end position="512"/>
    </location>
</feature>
<feature type="transmembrane region" description="Helical" evidence="1">
    <location>
        <begin position="513"/>
        <end position="533"/>
    </location>
</feature>
<feature type="topological domain" description="Cytoplasmic" evidence="1">
    <location>
        <begin position="534"/>
        <end position="843"/>
    </location>
</feature>
<keyword id="KW-0256">Endoplasmic reticulum</keyword>
<keyword id="KW-0444">Lipid biosynthesis</keyword>
<keyword id="KW-0443">Lipid metabolism</keyword>
<keyword id="KW-0472">Membrane</keyword>
<keyword id="KW-0489">Methyltransferase</keyword>
<keyword id="KW-0594">Phospholipid biosynthesis</keyword>
<keyword id="KW-1208">Phospholipid metabolism</keyword>
<keyword id="KW-1185">Reference proteome</keyword>
<keyword id="KW-0949">S-adenosyl-L-methionine</keyword>
<keyword id="KW-0808">Transferase</keyword>
<keyword id="KW-0812">Transmembrane</keyword>
<keyword id="KW-1133">Transmembrane helix</keyword>
<protein>
    <recommendedName>
        <fullName evidence="1">Phosphatidylethanolamine N-methyltransferase</fullName>
        <shortName evidence="1">PE methyltransferase</shortName>
        <shortName evidence="1">PEAMT</shortName>
        <shortName evidence="1">PEMT</shortName>
        <ecNumber evidence="1">2.1.1.17</ecNumber>
    </recommendedName>
</protein>
<proteinExistence type="inferred from homology"/>
<gene>
    <name type="primary">CHO2</name>
    <name type="ordered locus">AFR110C</name>
</gene>
<organism>
    <name type="scientific">Eremothecium gossypii (strain ATCC 10895 / CBS 109.51 / FGSC 9923 / NRRL Y-1056)</name>
    <name type="common">Yeast</name>
    <name type="synonym">Ashbya gossypii</name>
    <dbReference type="NCBI Taxonomy" id="284811"/>
    <lineage>
        <taxon>Eukaryota</taxon>
        <taxon>Fungi</taxon>
        <taxon>Dikarya</taxon>
        <taxon>Ascomycota</taxon>
        <taxon>Saccharomycotina</taxon>
        <taxon>Saccharomycetes</taxon>
        <taxon>Saccharomycetales</taxon>
        <taxon>Saccharomycetaceae</taxon>
        <taxon>Eremothecium</taxon>
    </lineage>
</organism>
<evidence type="ECO:0000255" key="1">
    <source>
        <dbReference type="HAMAP-Rule" id="MF_03217"/>
    </source>
</evidence>
<dbReference type="EC" id="2.1.1.17" evidence="1"/>
<dbReference type="EMBL" id="AE016819">
    <property type="protein sequence ID" value="AAS53481.1"/>
    <property type="molecule type" value="Genomic_DNA"/>
</dbReference>
<dbReference type="RefSeq" id="NP_985657.1">
    <property type="nucleotide sequence ID" value="NM_211011.1"/>
</dbReference>
<dbReference type="FunCoup" id="Q754G0">
    <property type="interactions" value="89"/>
</dbReference>
<dbReference type="STRING" id="284811.Q754G0"/>
<dbReference type="EnsemblFungi" id="AAS53481">
    <property type="protein sequence ID" value="AAS53481"/>
    <property type="gene ID" value="AGOS_AFR110C"/>
</dbReference>
<dbReference type="GeneID" id="4621900"/>
<dbReference type="KEGG" id="ago:AGOS_AFR110C"/>
<dbReference type="eggNOG" id="ENOG502QRGH">
    <property type="taxonomic scope" value="Eukaryota"/>
</dbReference>
<dbReference type="HOGENOM" id="CLU_005987_0_1_1"/>
<dbReference type="InParanoid" id="Q754G0"/>
<dbReference type="OMA" id="RIWYSVG"/>
<dbReference type="OrthoDB" id="4583at2759"/>
<dbReference type="UniPathway" id="UPA00753"/>
<dbReference type="Proteomes" id="UP000000591">
    <property type="component" value="Chromosome VI"/>
</dbReference>
<dbReference type="GO" id="GO:0005789">
    <property type="term" value="C:endoplasmic reticulum membrane"/>
    <property type="evidence" value="ECO:0007669"/>
    <property type="project" value="UniProtKB-SubCell"/>
</dbReference>
<dbReference type="GO" id="GO:0004608">
    <property type="term" value="F:phosphatidylethanolamine N-methyltransferase activity"/>
    <property type="evidence" value="ECO:0000318"/>
    <property type="project" value="GO_Central"/>
</dbReference>
<dbReference type="GO" id="GO:0032259">
    <property type="term" value="P:methylation"/>
    <property type="evidence" value="ECO:0007669"/>
    <property type="project" value="UniProtKB-KW"/>
</dbReference>
<dbReference type="GO" id="GO:0006656">
    <property type="term" value="P:phosphatidylcholine biosynthetic process"/>
    <property type="evidence" value="ECO:0000318"/>
    <property type="project" value="GO_Central"/>
</dbReference>
<dbReference type="Gene3D" id="1.20.120.1630">
    <property type="match status" value="1"/>
</dbReference>
<dbReference type="Gene3D" id="2.60.40.2840">
    <property type="match status" value="1"/>
</dbReference>
<dbReference type="HAMAP" id="MF_03217">
    <property type="entry name" value="PEMT"/>
    <property type="match status" value="1"/>
</dbReference>
<dbReference type="InterPro" id="IPR007318">
    <property type="entry name" value="Phopholipid_MeTrfase"/>
</dbReference>
<dbReference type="InterPro" id="IPR016219">
    <property type="entry name" value="Phosphatid-EA_MeTrfase_fun"/>
</dbReference>
<dbReference type="PANTHER" id="PTHR32138">
    <property type="entry name" value="PHOSPHATIDYLETHANOLAMINE N-METHYLTRANSFERASE"/>
    <property type="match status" value="1"/>
</dbReference>
<dbReference type="PANTHER" id="PTHR32138:SF0">
    <property type="entry name" value="PHOSPHATIDYLETHANOLAMINE N-METHYLTRANSFERASE"/>
    <property type="match status" value="1"/>
</dbReference>
<dbReference type="Pfam" id="PF04191">
    <property type="entry name" value="PEMT"/>
    <property type="match status" value="2"/>
</dbReference>
<dbReference type="PIRSF" id="PIRSF000383">
    <property type="entry name" value="PEAMT"/>
    <property type="match status" value="1"/>
</dbReference>
<dbReference type="PROSITE" id="PS51598">
    <property type="entry name" value="SAM_CHO2"/>
    <property type="match status" value="1"/>
</dbReference>